<proteinExistence type="inferred from homology"/>
<keyword id="KW-0240">DNA-directed RNA polymerase</keyword>
<keyword id="KW-0479">Metal-binding</keyword>
<keyword id="KW-0548">Nucleotidyltransferase</keyword>
<keyword id="KW-0804">Transcription</keyword>
<keyword id="KW-0808">Transferase</keyword>
<keyword id="KW-0862">Zinc</keyword>
<feature type="chain" id="PRO_0000225329" description="DNA-directed RNA polymerase subunit beta'">
    <location>
        <begin position="1"/>
        <end position="1318"/>
    </location>
</feature>
<feature type="binding site" evidence="1">
    <location>
        <position position="221"/>
    </location>
    <ligand>
        <name>Zn(2+)</name>
        <dbReference type="ChEBI" id="CHEBI:29105"/>
    </ligand>
</feature>
<feature type="binding site" evidence="1">
    <location>
        <position position="295"/>
    </location>
    <ligand>
        <name>Zn(2+)</name>
        <dbReference type="ChEBI" id="CHEBI:29105"/>
    </ligand>
</feature>
<feature type="binding site" evidence="1">
    <location>
        <position position="302"/>
    </location>
    <ligand>
        <name>Zn(2+)</name>
        <dbReference type="ChEBI" id="CHEBI:29105"/>
    </ligand>
</feature>
<feature type="binding site" evidence="1">
    <location>
        <position position="305"/>
    </location>
    <ligand>
        <name>Zn(2+)</name>
        <dbReference type="ChEBI" id="CHEBI:29105"/>
    </ligand>
</feature>
<dbReference type="EC" id="2.7.7.6" evidence="1"/>
<dbReference type="EMBL" id="AP008231">
    <property type="protein sequence ID" value="BAD80699.1"/>
    <property type="molecule type" value="Genomic_DNA"/>
</dbReference>
<dbReference type="SMR" id="Q5MZ21"/>
<dbReference type="KEGG" id="syc:syc2509_d"/>
<dbReference type="eggNOG" id="COG0086">
    <property type="taxonomic scope" value="Bacteria"/>
</dbReference>
<dbReference type="Proteomes" id="UP000001175">
    <property type="component" value="Chromosome"/>
</dbReference>
<dbReference type="GO" id="GO:0000428">
    <property type="term" value="C:DNA-directed RNA polymerase complex"/>
    <property type="evidence" value="ECO:0007669"/>
    <property type="project" value="UniProtKB-KW"/>
</dbReference>
<dbReference type="GO" id="GO:0003677">
    <property type="term" value="F:DNA binding"/>
    <property type="evidence" value="ECO:0007669"/>
    <property type="project" value="UniProtKB-UniRule"/>
</dbReference>
<dbReference type="GO" id="GO:0003899">
    <property type="term" value="F:DNA-directed RNA polymerase activity"/>
    <property type="evidence" value="ECO:0007669"/>
    <property type="project" value="UniProtKB-UniRule"/>
</dbReference>
<dbReference type="GO" id="GO:0008270">
    <property type="term" value="F:zinc ion binding"/>
    <property type="evidence" value="ECO:0007669"/>
    <property type="project" value="UniProtKB-UniRule"/>
</dbReference>
<dbReference type="GO" id="GO:0006351">
    <property type="term" value="P:DNA-templated transcription"/>
    <property type="evidence" value="ECO:0007669"/>
    <property type="project" value="UniProtKB-UniRule"/>
</dbReference>
<dbReference type="CDD" id="cd02655">
    <property type="entry name" value="RNAP_beta'_C"/>
    <property type="match status" value="1"/>
</dbReference>
<dbReference type="FunFam" id="1.10.150.390:FF:000002">
    <property type="entry name" value="DNA-directed RNA polymerase subunit beta"/>
    <property type="match status" value="1"/>
</dbReference>
<dbReference type="Gene3D" id="1.10.132.30">
    <property type="match status" value="1"/>
</dbReference>
<dbReference type="Gene3D" id="1.10.150.390">
    <property type="match status" value="1"/>
</dbReference>
<dbReference type="Gene3D" id="1.10.1790.20">
    <property type="match status" value="1"/>
</dbReference>
<dbReference type="Gene3D" id="2.40.50.100">
    <property type="match status" value="1"/>
</dbReference>
<dbReference type="Gene3D" id="1.10.274.100">
    <property type="entry name" value="RNA polymerase Rpb1, domain 3"/>
    <property type="match status" value="1"/>
</dbReference>
<dbReference type="HAMAP" id="MF_01324">
    <property type="entry name" value="RNApol_bact_RpoC2"/>
    <property type="match status" value="1"/>
</dbReference>
<dbReference type="InterPro" id="IPR012756">
    <property type="entry name" value="DNA-dir_RpoC2_beta_pp"/>
</dbReference>
<dbReference type="InterPro" id="IPR045867">
    <property type="entry name" value="DNA-dir_RpoC_beta_prime"/>
</dbReference>
<dbReference type="InterPro" id="IPR007066">
    <property type="entry name" value="RNA_pol_Rpb1_3"/>
</dbReference>
<dbReference type="InterPro" id="IPR042102">
    <property type="entry name" value="RNA_pol_Rpb1_3_sf"/>
</dbReference>
<dbReference type="InterPro" id="IPR007083">
    <property type="entry name" value="RNA_pol_Rpb1_4"/>
</dbReference>
<dbReference type="InterPro" id="IPR007081">
    <property type="entry name" value="RNA_pol_Rpb1_5"/>
</dbReference>
<dbReference type="InterPro" id="IPR038120">
    <property type="entry name" value="Rpb1_funnel_sf"/>
</dbReference>
<dbReference type="NCBIfam" id="NF002724">
    <property type="entry name" value="PRK02597.1"/>
    <property type="match status" value="1"/>
</dbReference>
<dbReference type="NCBIfam" id="TIGR02388">
    <property type="entry name" value="rpoC2_cyan"/>
    <property type="match status" value="1"/>
</dbReference>
<dbReference type="PANTHER" id="PTHR19376">
    <property type="entry name" value="DNA-DIRECTED RNA POLYMERASE"/>
    <property type="match status" value="1"/>
</dbReference>
<dbReference type="PANTHER" id="PTHR19376:SF68">
    <property type="entry name" value="DNA-DIRECTED RNA POLYMERASE SUBUNIT BETA"/>
    <property type="match status" value="1"/>
</dbReference>
<dbReference type="Pfam" id="PF04983">
    <property type="entry name" value="RNA_pol_Rpb1_3"/>
    <property type="match status" value="1"/>
</dbReference>
<dbReference type="Pfam" id="PF05000">
    <property type="entry name" value="RNA_pol_Rpb1_4"/>
    <property type="match status" value="1"/>
</dbReference>
<dbReference type="Pfam" id="PF04998">
    <property type="entry name" value="RNA_pol_Rpb1_5"/>
    <property type="match status" value="2"/>
</dbReference>
<dbReference type="SUPFAM" id="SSF64484">
    <property type="entry name" value="beta and beta-prime subunits of DNA dependent RNA-polymerase"/>
    <property type="match status" value="1"/>
</dbReference>
<organism>
    <name type="scientific">Synechococcus sp. (strain ATCC 27144 / PCC 6301 / SAUG 1402/1)</name>
    <name type="common">Anacystis nidulans</name>
    <dbReference type="NCBI Taxonomy" id="269084"/>
    <lineage>
        <taxon>Bacteria</taxon>
        <taxon>Bacillati</taxon>
        <taxon>Cyanobacteriota</taxon>
        <taxon>Cyanophyceae</taxon>
        <taxon>Synechococcales</taxon>
        <taxon>Synechococcaceae</taxon>
        <taxon>Synechococcus</taxon>
    </lineage>
</organism>
<evidence type="ECO:0000255" key="1">
    <source>
        <dbReference type="HAMAP-Rule" id="MF_01324"/>
    </source>
</evidence>
<reference key="1">
    <citation type="journal article" date="2007" name="Photosyn. Res.">
        <title>Complete nucleotide sequence of the freshwater unicellular cyanobacterium Synechococcus elongatus PCC 6301 chromosome: gene content and organization.</title>
        <authorList>
            <person name="Sugita C."/>
            <person name="Ogata K."/>
            <person name="Shikata M."/>
            <person name="Jikuya H."/>
            <person name="Takano J."/>
            <person name="Furumichi M."/>
            <person name="Kanehisa M."/>
            <person name="Omata T."/>
            <person name="Sugiura M."/>
            <person name="Sugita M."/>
        </authorList>
    </citation>
    <scope>NUCLEOTIDE SEQUENCE [LARGE SCALE GENOMIC DNA]</scope>
    <source>
        <strain>ATCC 27144 / PCC 6301 / SAUG 1402/1</strain>
    </source>
</reference>
<sequence length="1318" mass="143828">MAETKSAPIFRNRVIDKKQLKKLIGWTFAHYGTAKTAVVADDLKALGFRYATRAGVSISIDDLKVPGSKAELLESAEKRIQETEDRYTRGEITEVERFQKVIDTWANTNDELTDRVVKNFRESDPLNSVYMMAFSGARGNISQVRQLVGMRGLMANPQGEIIDLPIKTNFREGLTVTEYIISSYGARKGLVDTALRTADSGYLTRRLVDVSQDVIIHEVDCGTSRGLFVEAMTDGDRILIPISQRLLGRVTAEAVLDPSTDEVLAEAGQDINEDLANRIEKAGIKKVKVRSPLTCEAARSVCQKCYGWSLAHAQMVDMGEAVGIIAAQSIGEPGTQLTMRTFHTGGVFTGETARLLRAPVAGTIKLGKKARTRPYRTRHGEEALLAEANFDLVLEGKGRKETFAILQGSTIFVQDGDKVAAEAILAEVPVSGRTKRTVEKATKDVATDLAGEIRFQDIVPEEKTDRQGNTTRIAQRGGLLWVLAGDVYNLLPGAEPTVKNGDRVEVGDVLAETKLTTERGGTVRMGEDNGSSTHREVEIITASVVLDTATVKAEASQGREHYVIETKGGQRFNLLAAPGTKVTTGHVVAELIDSRYRTQTGGLLKYSGVEISKKGRAKAKQGYEVTKGGTLLWIPEETHEVNKDISLLNVEDGQLVEAGTEVVKDIFCQTTGIVSVTQNNDILREIVIKPGDVHVLDDPDTAAKYDEGRLVNAGEEVFPGLTAEQLVWAEAVDGTDGPLLLLRPVQELVIPDEPPVPSQDSSQESSSRSIRLRAVQRLQFQDGERIKSVEGVDLLRTQLVLESEEGSSQLSADIELLPDSKDPETLRLQLVIIEPVVTRRDVASDTTHGSTHTELRVKDGQKVKPGAVIACTQIQCKEAGVVRGIQEGSEAVRRLLVERERDCVTLDLDVTAATQLQPGSLIVAGTQLVDGIIAPESGEARAIAPGQLQLRIARPYRVSQGAVLHVEDKGLVQRGDNLVLLVFERAKTGDIIQGLPRIEELLEARKPKEACILARRPGVAHINYSDDDAIDIQVIEADGTQADYPVGPGQPLIISDGETVDAGQALTDGPANPHDLLEIYYDYFREQLGEDYEAALESLRRVQALLVNEVQSVYQSQGIDISDKHIEVIVRQMTSKVRIDDGGDTIMLPGELHELREVYNSNNTMALTGMAPAQFTPVLLGITKASLNTNSFISAASFQETTRVLTEAAIEGKSDWLRGLKENVIIGRLIPAGTGFKAYEESLLTDVDGGYEDRVYDDDLADVVIDDRAARSYTLNEGRDFSRSMTFAEGESMILDDGEELIDDSSASLRNLVDVDED</sequence>
<protein>
    <recommendedName>
        <fullName evidence="1">DNA-directed RNA polymerase subunit beta'</fullName>
        <shortName evidence="1">RNAP subunit beta'</shortName>
        <ecNumber evidence="1">2.7.7.6</ecNumber>
    </recommendedName>
    <alternativeName>
        <fullName evidence="1">RNA polymerase subunit beta'</fullName>
    </alternativeName>
    <alternativeName>
        <fullName evidence="1">Transcriptase subunit beta'</fullName>
    </alternativeName>
</protein>
<gene>
    <name evidence="1" type="primary">rpoC2</name>
    <name type="ordered locus">syc2509_d</name>
</gene>
<accession>Q5MZ21</accession>
<name>RPOC2_SYNP6</name>
<comment type="function">
    <text evidence="1">DNA-dependent RNA polymerase catalyzes the transcription of DNA into RNA using the four ribonucleoside triphosphates as substrates.</text>
</comment>
<comment type="catalytic activity">
    <reaction evidence="1">
        <text>RNA(n) + a ribonucleoside 5'-triphosphate = RNA(n+1) + diphosphate</text>
        <dbReference type="Rhea" id="RHEA:21248"/>
        <dbReference type="Rhea" id="RHEA-COMP:14527"/>
        <dbReference type="Rhea" id="RHEA-COMP:17342"/>
        <dbReference type="ChEBI" id="CHEBI:33019"/>
        <dbReference type="ChEBI" id="CHEBI:61557"/>
        <dbReference type="ChEBI" id="CHEBI:140395"/>
        <dbReference type="EC" id="2.7.7.6"/>
    </reaction>
</comment>
<comment type="cofactor">
    <cofactor evidence="1">
        <name>Zn(2+)</name>
        <dbReference type="ChEBI" id="CHEBI:29105"/>
    </cofactor>
    <text evidence="1">Binds 1 Zn(2+) ion per subunit.</text>
</comment>
<comment type="subunit">
    <text evidence="1">In cyanobacteria the RNAP catalytic core is composed of 2 alpha, 1 beta, 1 beta', 1 gamma and 1 omega subunit. When a sigma factor is associated with the core the holoenzyme is formed, which can initiate transcription.</text>
</comment>
<comment type="similarity">
    <text evidence="1">Belongs to the RNA polymerase beta' chain family. RpoC2 subfamily.</text>
</comment>